<keyword id="KW-1185">Reference proteome</keyword>
<evidence type="ECO:0000255" key="1">
    <source>
        <dbReference type="HAMAP-Rule" id="MF_00048"/>
    </source>
</evidence>
<feature type="chain" id="PRO_0000336159" description="UPF0102 protein CD630_12710">
    <location>
        <begin position="1"/>
        <end position="114"/>
    </location>
</feature>
<accession>Q18BD4</accession>
<name>Y1271_CLOD6</name>
<organism>
    <name type="scientific">Clostridioides difficile (strain 630)</name>
    <name type="common">Peptoclostridium difficile</name>
    <dbReference type="NCBI Taxonomy" id="272563"/>
    <lineage>
        <taxon>Bacteria</taxon>
        <taxon>Bacillati</taxon>
        <taxon>Bacillota</taxon>
        <taxon>Clostridia</taxon>
        <taxon>Peptostreptococcales</taxon>
        <taxon>Peptostreptococcaceae</taxon>
        <taxon>Clostridioides</taxon>
    </lineage>
</organism>
<protein>
    <recommendedName>
        <fullName evidence="1">UPF0102 protein CD630_12710</fullName>
    </recommendedName>
</protein>
<comment type="similarity">
    <text evidence="1">Belongs to the UPF0102 family.</text>
</comment>
<sequence>MNNKEKGDFGEKVAVNYLLSKGAKILEKNYRLKIGEIDIIAKMEDEIIFVEVKSRSNIKFGYPCESVSFKKRKKIIGVASYYIIKNNLNNTPIRFDVIEVYLLEKRINHIMNAF</sequence>
<reference key="1">
    <citation type="journal article" date="2006" name="Nat. Genet.">
        <title>The multidrug-resistant human pathogen Clostridium difficile has a highly mobile, mosaic genome.</title>
        <authorList>
            <person name="Sebaihia M."/>
            <person name="Wren B.W."/>
            <person name="Mullany P."/>
            <person name="Fairweather N.F."/>
            <person name="Minton N."/>
            <person name="Stabler R."/>
            <person name="Thomson N.R."/>
            <person name="Roberts A.P."/>
            <person name="Cerdeno-Tarraga A.M."/>
            <person name="Wang H."/>
            <person name="Holden M.T.G."/>
            <person name="Wright A."/>
            <person name="Churcher C."/>
            <person name="Quail M.A."/>
            <person name="Baker S."/>
            <person name="Bason N."/>
            <person name="Brooks K."/>
            <person name="Chillingworth T."/>
            <person name="Cronin A."/>
            <person name="Davis P."/>
            <person name="Dowd L."/>
            <person name="Fraser A."/>
            <person name="Feltwell T."/>
            <person name="Hance Z."/>
            <person name="Holroyd S."/>
            <person name="Jagels K."/>
            <person name="Moule S."/>
            <person name="Mungall K."/>
            <person name="Price C."/>
            <person name="Rabbinowitsch E."/>
            <person name="Sharp S."/>
            <person name="Simmonds M."/>
            <person name="Stevens K."/>
            <person name="Unwin L."/>
            <person name="Whithead S."/>
            <person name="Dupuy B."/>
            <person name="Dougan G."/>
            <person name="Barrell B."/>
            <person name="Parkhill J."/>
        </authorList>
    </citation>
    <scope>NUCLEOTIDE SEQUENCE [LARGE SCALE GENOMIC DNA]</scope>
    <source>
        <strain>630</strain>
    </source>
</reference>
<gene>
    <name type="ordered locus">CD630_12710</name>
</gene>
<proteinExistence type="inferred from homology"/>
<dbReference type="EMBL" id="AM180355">
    <property type="protein sequence ID" value="CAJ68127.1"/>
    <property type="molecule type" value="Genomic_DNA"/>
</dbReference>
<dbReference type="RefSeq" id="WP_003438259.1">
    <property type="nucleotide sequence ID" value="NZ_JAUPES010000027.1"/>
</dbReference>
<dbReference type="RefSeq" id="YP_001087765.1">
    <property type="nucleotide sequence ID" value="NC_009089.1"/>
</dbReference>
<dbReference type="SMR" id="Q18BD4"/>
<dbReference type="STRING" id="272563.CD630_12710"/>
<dbReference type="DNASU" id="4915864"/>
<dbReference type="EnsemblBacteria" id="CAJ68127">
    <property type="protein sequence ID" value="CAJ68127"/>
    <property type="gene ID" value="CD630_12710"/>
</dbReference>
<dbReference type="KEGG" id="cdf:CD630_12710"/>
<dbReference type="KEGG" id="pdc:CDIF630_01424"/>
<dbReference type="PATRIC" id="fig|272563.120.peg.1329"/>
<dbReference type="eggNOG" id="COG0792">
    <property type="taxonomic scope" value="Bacteria"/>
</dbReference>
<dbReference type="OrthoDB" id="9802516at2"/>
<dbReference type="PhylomeDB" id="Q18BD4"/>
<dbReference type="BioCyc" id="PDIF272563:G12WB-1405-MONOMER"/>
<dbReference type="Proteomes" id="UP000001978">
    <property type="component" value="Chromosome"/>
</dbReference>
<dbReference type="GO" id="GO:0003676">
    <property type="term" value="F:nucleic acid binding"/>
    <property type="evidence" value="ECO:0007669"/>
    <property type="project" value="InterPro"/>
</dbReference>
<dbReference type="CDD" id="cd20736">
    <property type="entry name" value="PoNe_Nuclease"/>
    <property type="match status" value="1"/>
</dbReference>
<dbReference type="Gene3D" id="3.40.1350.10">
    <property type="match status" value="1"/>
</dbReference>
<dbReference type="HAMAP" id="MF_00048">
    <property type="entry name" value="UPF0102"/>
    <property type="match status" value="1"/>
</dbReference>
<dbReference type="InterPro" id="IPR011335">
    <property type="entry name" value="Restrct_endonuc-II-like"/>
</dbReference>
<dbReference type="InterPro" id="IPR011856">
    <property type="entry name" value="tRNA_endonuc-like_dom_sf"/>
</dbReference>
<dbReference type="InterPro" id="IPR003509">
    <property type="entry name" value="UPF0102_YraN-like"/>
</dbReference>
<dbReference type="NCBIfam" id="NF009150">
    <property type="entry name" value="PRK12497.1-3"/>
    <property type="match status" value="1"/>
</dbReference>
<dbReference type="NCBIfam" id="TIGR00252">
    <property type="entry name" value="YraN family protein"/>
    <property type="match status" value="1"/>
</dbReference>
<dbReference type="PANTHER" id="PTHR34039">
    <property type="entry name" value="UPF0102 PROTEIN YRAN"/>
    <property type="match status" value="1"/>
</dbReference>
<dbReference type="PANTHER" id="PTHR34039:SF1">
    <property type="entry name" value="UPF0102 PROTEIN YRAN"/>
    <property type="match status" value="1"/>
</dbReference>
<dbReference type="Pfam" id="PF02021">
    <property type="entry name" value="UPF0102"/>
    <property type="match status" value="1"/>
</dbReference>
<dbReference type="SUPFAM" id="SSF52980">
    <property type="entry name" value="Restriction endonuclease-like"/>
    <property type="match status" value="1"/>
</dbReference>